<keyword id="KW-0066">ATP synthesis</keyword>
<keyword id="KW-1003">Cell membrane</keyword>
<keyword id="KW-0138">CF(0)</keyword>
<keyword id="KW-0375">Hydrogen ion transport</keyword>
<keyword id="KW-0406">Ion transport</keyword>
<keyword id="KW-0472">Membrane</keyword>
<keyword id="KW-0812">Transmembrane</keyword>
<keyword id="KW-1133">Transmembrane helix</keyword>
<keyword id="KW-0813">Transport</keyword>
<accession>Q5XCY4</accession>
<sequence>MSITFGELVGNFILVTGSVIVLLLLIKKFAWGAIESILQTRSQQISRDIDQAEQSRLSAQQLETKSQANLDASRSQASKIISDAKEIGQLQGDKLVAEATDEAKRLKEKALTDIEQSKSDAISAVKTEMSDLTVLLAEKIMGANLDKTAQSQLIDSYLDDLGEA</sequence>
<name>ATPF_STRP6</name>
<protein>
    <recommendedName>
        <fullName evidence="1">ATP synthase subunit b</fullName>
    </recommendedName>
    <alternativeName>
        <fullName evidence="1">ATP synthase F(0) sector subunit b</fullName>
    </alternativeName>
    <alternativeName>
        <fullName evidence="1">ATPase subunit I</fullName>
    </alternativeName>
    <alternativeName>
        <fullName evidence="1">F-type ATPase subunit b</fullName>
        <shortName evidence="1">F-ATPase subunit b</shortName>
    </alternativeName>
</protein>
<comment type="function">
    <text evidence="1">F(1)F(0) ATP synthase produces ATP from ADP in the presence of a proton or sodium gradient. F-type ATPases consist of two structural domains, F(1) containing the extramembraneous catalytic core and F(0) containing the membrane proton channel, linked together by a central stalk and a peripheral stalk. During catalysis, ATP synthesis in the catalytic domain of F(1) is coupled via a rotary mechanism of the central stalk subunits to proton translocation.</text>
</comment>
<comment type="function">
    <text evidence="1">Component of the F(0) channel, it forms part of the peripheral stalk, linking F(1) to F(0).</text>
</comment>
<comment type="subunit">
    <text evidence="1">F-type ATPases have 2 components, F(1) - the catalytic core - and F(0) - the membrane proton channel. F(1) has five subunits: alpha(3), beta(3), gamma(1), delta(1), epsilon(1). F(0) has three main subunits: a(1), b(2) and c(10-14). The alpha and beta chains form an alternating ring which encloses part of the gamma chain. F(1) is attached to F(0) by a central stalk formed by the gamma and epsilon chains, while a peripheral stalk is formed by the delta and b chains.</text>
</comment>
<comment type="subcellular location">
    <subcellularLocation>
        <location evidence="1">Cell membrane</location>
        <topology evidence="1">Single-pass membrane protein</topology>
    </subcellularLocation>
</comment>
<comment type="similarity">
    <text evidence="1">Belongs to the ATPase B chain family.</text>
</comment>
<reference key="1">
    <citation type="journal article" date="2004" name="J. Infect. Dis.">
        <title>Progress toward characterization of the group A Streptococcus metagenome: complete genome sequence of a macrolide-resistant serotype M6 strain.</title>
        <authorList>
            <person name="Banks D.J."/>
            <person name="Porcella S.F."/>
            <person name="Barbian K.D."/>
            <person name="Beres S.B."/>
            <person name="Philips L.E."/>
            <person name="Voyich J.M."/>
            <person name="DeLeo F.R."/>
            <person name="Martin J.M."/>
            <person name="Somerville G.A."/>
            <person name="Musser J.M."/>
        </authorList>
    </citation>
    <scope>NUCLEOTIDE SEQUENCE [LARGE SCALE GENOMIC DNA]</scope>
    <source>
        <strain>ATCC BAA-946 / MGAS10394</strain>
    </source>
</reference>
<organism>
    <name type="scientific">Streptococcus pyogenes serotype M6 (strain ATCC BAA-946 / MGAS10394)</name>
    <dbReference type="NCBI Taxonomy" id="286636"/>
    <lineage>
        <taxon>Bacteria</taxon>
        <taxon>Bacillati</taxon>
        <taxon>Bacillota</taxon>
        <taxon>Bacilli</taxon>
        <taxon>Lactobacillales</taxon>
        <taxon>Streptococcaceae</taxon>
        <taxon>Streptococcus</taxon>
    </lineage>
</organism>
<gene>
    <name evidence="1" type="primary">atpF</name>
    <name type="ordered locus">M6_Spy0594</name>
</gene>
<proteinExistence type="inferred from homology"/>
<evidence type="ECO:0000255" key="1">
    <source>
        <dbReference type="HAMAP-Rule" id="MF_01398"/>
    </source>
</evidence>
<feature type="chain" id="PRO_0000368810" description="ATP synthase subunit b">
    <location>
        <begin position="1"/>
        <end position="164"/>
    </location>
</feature>
<feature type="transmembrane region" description="Helical" evidence="1">
    <location>
        <begin position="6"/>
        <end position="26"/>
    </location>
</feature>
<dbReference type="EMBL" id="CP000003">
    <property type="protein sequence ID" value="AAT86729.1"/>
    <property type="molecule type" value="Genomic_DNA"/>
</dbReference>
<dbReference type="RefSeq" id="WP_002985242.1">
    <property type="nucleotide sequence ID" value="NC_006086.1"/>
</dbReference>
<dbReference type="SMR" id="Q5XCY4"/>
<dbReference type="KEGG" id="spa:M6_Spy0594"/>
<dbReference type="HOGENOM" id="CLU_079215_4_2_9"/>
<dbReference type="Proteomes" id="UP000001167">
    <property type="component" value="Chromosome"/>
</dbReference>
<dbReference type="GO" id="GO:0005886">
    <property type="term" value="C:plasma membrane"/>
    <property type="evidence" value="ECO:0007669"/>
    <property type="project" value="UniProtKB-SubCell"/>
</dbReference>
<dbReference type="GO" id="GO:0045259">
    <property type="term" value="C:proton-transporting ATP synthase complex"/>
    <property type="evidence" value="ECO:0007669"/>
    <property type="project" value="UniProtKB-KW"/>
</dbReference>
<dbReference type="GO" id="GO:0046933">
    <property type="term" value="F:proton-transporting ATP synthase activity, rotational mechanism"/>
    <property type="evidence" value="ECO:0007669"/>
    <property type="project" value="UniProtKB-UniRule"/>
</dbReference>
<dbReference type="GO" id="GO:0046961">
    <property type="term" value="F:proton-transporting ATPase activity, rotational mechanism"/>
    <property type="evidence" value="ECO:0007669"/>
    <property type="project" value="TreeGrafter"/>
</dbReference>
<dbReference type="CDD" id="cd06503">
    <property type="entry name" value="ATP-synt_Fo_b"/>
    <property type="match status" value="1"/>
</dbReference>
<dbReference type="HAMAP" id="MF_01398">
    <property type="entry name" value="ATP_synth_b_bprime"/>
    <property type="match status" value="1"/>
</dbReference>
<dbReference type="InterPro" id="IPR028987">
    <property type="entry name" value="ATP_synth_B-like_membr_sf"/>
</dbReference>
<dbReference type="InterPro" id="IPR002146">
    <property type="entry name" value="ATP_synth_b/b'su_bac/chlpt"/>
</dbReference>
<dbReference type="InterPro" id="IPR005864">
    <property type="entry name" value="ATP_synth_F0_bsu_bac"/>
</dbReference>
<dbReference type="InterPro" id="IPR050059">
    <property type="entry name" value="ATP_synthase_B_chain"/>
</dbReference>
<dbReference type="NCBIfam" id="TIGR01144">
    <property type="entry name" value="ATP_synt_b"/>
    <property type="match status" value="1"/>
</dbReference>
<dbReference type="PANTHER" id="PTHR33445:SF1">
    <property type="entry name" value="ATP SYNTHASE SUBUNIT B"/>
    <property type="match status" value="1"/>
</dbReference>
<dbReference type="PANTHER" id="PTHR33445">
    <property type="entry name" value="ATP SYNTHASE SUBUNIT B', CHLOROPLASTIC"/>
    <property type="match status" value="1"/>
</dbReference>
<dbReference type="Pfam" id="PF00430">
    <property type="entry name" value="ATP-synt_B"/>
    <property type="match status" value="1"/>
</dbReference>
<dbReference type="SUPFAM" id="SSF81573">
    <property type="entry name" value="F1F0 ATP synthase subunit B, membrane domain"/>
    <property type="match status" value="1"/>
</dbReference>